<dbReference type="EC" id="3.4.14.10" evidence="2"/>
<dbReference type="EMBL" id="X81323">
    <property type="protein sequence ID" value="CAA57103.1"/>
    <property type="molecule type" value="mRNA"/>
</dbReference>
<dbReference type="EMBL" id="BC058239">
    <property type="protein sequence ID" value="AAH58239.1"/>
    <property type="molecule type" value="mRNA"/>
</dbReference>
<dbReference type="CCDS" id="CCDS14926.1">
    <molecule id="Q64514-1"/>
</dbReference>
<dbReference type="CCDS" id="CCDS78577.1">
    <molecule id="Q64514-2"/>
</dbReference>
<dbReference type="PIR" id="I48855">
    <property type="entry name" value="I48855"/>
</dbReference>
<dbReference type="RefSeq" id="NP_001297469.1">
    <molecule id="Q64514-2"/>
    <property type="nucleotide sequence ID" value="NM_001310540.1"/>
</dbReference>
<dbReference type="RefSeq" id="NP_033444.1">
    <molecule id="Q64514-1"/>
    <property type="nucleotide sequence ID" value="NM_009418.3"/>
</dbReference>
<dbReference type="SMR" id="Q64514"/>
<dbReference type="BioGRID" id="204295">
    <property type="interactions" value="7"/>
</dbReference>
<dbReference type="CORUM" id="Q64514"/>
<dbReference type="FunCoup" id="Q64514">
    <property type="interactions" value="5377"/>
</dbReference>
<dbReference type="IntAct" id="Q64514">
    <property type="interactions" value="1"/>
</dbReference>
<dbReference type="STRING" id="10090.ENSMUSP00000085244"/>
<dbReference type="ChEMBL" id="CHEMBL5512"/>
<dbReference type="MEROPS" id="S08.A56"/>
<dbReference type="GlyGen" id="Q64514">
    <property type="glycosylation" value="3 sites, 1 N-linked glycan (1 site), 1 O-linked glycan (2 sites)"/>
</dbReference>
<dbReference type="iPTMnet" id="Q64514"/>
<dbReference type="PhosphoSitePlus" id="Q64514"/>
<dbReference type="SwissPalm" id="Q64514"/>
<dbReference type="jPOST" id="Q64514"/>
<dbReference type="PaxDb" id="10090-ENSMUSP00000085244"/>
<dbReference type="PeptideAtlas" id="Q64514"/>
<dbReference type="ProteomicsDB" id="258830">
    <molecule id="Q64514-1"/>
</dbReference>
<dbReference type="ProteomicsDB" id="258831">
    <molecule id="Q64514-2"/>
</dbReference>
<dbReference type="Pumba" id="Q64514"/>
<dbReference type="Antibodypedia" id="11138">
    <property type="antibodies" value="133 antibodies from 27 providers"/>
</dbReference>
<dbReference type="DNASU" id="22019"/>
<dbReference type="Ensembl" id="ENSMUST00000087933.10">
    <molecule id="Q64514-1"/>
    <property type="protein sequence ID" value="ENSMUSP00000085244.4"/>
    <property type="gene ID" value="ENSMUSG00000041763.15"/>
</dbReference>
<dbReference type="Ensembl" id="ENSMUST00000188313.7">
    <molecule id="Q64514-2"/>
    <property type="protein sequence ID" value="ENSMUSP00000139918.2"/>
    <property type="gene ID" value="ENSMUSG00000041763.15"/>
</dbReference>
<dbReference type="GeneID" id="22019"/>
<dbReference type="KEGG" id="mmu:22019"/>
<dbReference type="UCSC" id="uc007avs.1">
    <molecule id="Q64514-1"/>
    <property type="organism name" value="mouse"/>
</dbReference>
<dbReference type="UCSC" id="uc007avt.1">
    <molecule id="Q64514-2"/>
    <property type="organism name" value="mouse"/>
</dbReference>
<dbReference type="AGR" id="MGI:102724"/>
<dbReference type="CTD" id="7174"/>
<dbReference type="MGI" id="MGI:102724">
    <property type="gene designation" value="Tpp2"/>
</dbReference>
<dbReference type="VEuPathDB" id="HostDB:ENSMUSG00000041763"/>
<dbReference type="eggNOG" id="KOG1114">
    <property type="taxonomic scope" value="Eukaryota"/>
</dbReference>
<dbReference type="GeneTree" id="ENSGT00390000014623"/>
<dbReference type="InParanoid" id="Q64514"/>
<dbReference type="OMA" id="SLRDFQC"/>
<dbReference type="OrthoDB" id="10256524at2759"/>
<dbReference type="PhylomeDB" id="Q64514"/>
<dbReference type="TreeFam" id="TF105647"/>
<dbReference type="BRENDA" id="3.4.14.10">
    <property type="organism ID" value="3474"/>
</dbReference>
<dbReference type="Reactome" id="R-MMU-983168">
    <property type="pathway name" value="Antigen processing: Ubiquitination &amp; Proteasome degradation"/>
</dbReference>
<dbReference type="BioGRID-ORCS" id="22019">
    <property type="hits" value="1 hit in 61 CRISPR screens"/>
</dbReference>
<dbReference type="ChiTaRS" id="Tpp2">
    <property type="organism name" value="mouse"/>
</dbReference>
<dbReference type="PRO" id="PR:Q64514"/>
<dbReference type="Proteomes" id="UP000000589">
    <property type="component" value="Chromosome 1"/>
</dbReference>
<dbReference type="RNAct" id="Q64514">
    <property type="molecule type" value="protein"/>
</dbReference>
<dbReference type="Bgee" id="ENSMUSG00000041763">
    <property type="expression patterns" value="Expressed in spermatid and 248 other cell types or tissues"/>
</dbReference>
<dbReference type="ExpressionAtlas" id="Q64514">
    <property type="expression patterns" value="baseline and differential"/>
</dbReference>
<dbReference type="GO" id="GO:0005829">
    <property type="term" value="C:cytosol"/>
    <property type="evidence" value="ECO:0007669"/>
    <property type="project" value="Ensembl"/>
</dbReference>
<dbReference type="GO" id="GO:0005783">
    <property type="term" value="C:endoplasmic reticulum"/>
    <property type="evidence" value="ECO:0007669"/>
    <property type="project" value="UniProtKB-ARBA"/>
</dbReference>
<dbReference type="GO" id="GO:0016604">
    <property type="term" value="C:nuclear body"/>
    <property type="evidence" value="ECO:0007669"/>
    <property type="project" value="Ensembl"/>
</dbReference>
<dbReference type="GO" id="GO:0004177">
    <property type="term" value="F:aminopeptidase activity"/>
    <property type="evidence" value="ECO:0000250"/>
    <property type="project" value="UniProtKB"/>
</dbReference>
<dbReference type="GO" id="GO:0004252">
    <property type="term" value="F:serine-type endopeptidase activity"/>
    <property type="evidence" value="ECO:0007669"/>
    <property type="project" value="InterPro"/>
</dbReference>
<dbReference type="GO" id="GO:0008240">
    <property type="term" value="F:tripeptidyl-peptidase activity"/>
    <property type="evidence" value="ECO:0007669"/>
    <property type="project" value="UniProtKB-EC"/>
</dbReference>
<dbReference type="GO" id="GO:0006508">
    <property type="term" value="P:proteolysis"/>
    <property type="evidence" value="ECO:0007669"/>
    <property type="project" value="UniProtKB-KW"/>
</dbReference>
<dbReference type="CDD" id="cd04857">
    <property type="entry name" value="Peptidases_S8_Tripeptidyl_Aminopeptidase_II"/>
    <property type="match status" value="1"/>
</dbReference>
<dbReference type="FunFam" id="1.25.40.710:FF:000001">
    <property type="entry name" value="Tripeptidyl peptidase 2"/>
    <property type="match status" value="1"/>
</dbReference>
<dbReference type="FunFam" id="2.60.40.3170:FF:000001">
    <property type="entry name" value="Tripeptidyl peptidase 2"/>
    <property type="match status" value="1"/>
</dbReference>
<dbReference type="FunFam" id="3.40.50.200:FF:000003">
    <property type="entry name" value="Tripeptidyl peptidase 2"/>
    <property type="match status" value="1"/>
</dbReference>
<dbReference type="FunFam" id="3.40.50.200:FF:000009">
    <property type="entry name" value="tripeptidyl-peptidase 2 isoform X1"/>
    <property type="match status" value="1"/>
</dbReference>
<dbReference type="Gene3D" id="1.25.40.710">
    <property type="match status" value="1"/>
</dbReference>
<dbReference type="Gene3D" id="2.60.40.3170">
    <property type="match status" value="1"/>
</dbReference>
<dbReference type="Gene3D" id="6.10.250.3080">
    <property type="match status" value="1"/>
</dbReference>
<dbReference type="Gene3D" id="3.40.50.200">
    <property type="entry name" value="Peptidase S8/S53 domain"/>
    <property type="match status" value="2"/>
</dbReference>
<dbReference type="InterPro" id="IPR000209">
    <property type="entry name" value="Peptidase_S8/S53_dom"/>
</dbReference>
<dbReference type="InterPro" id="IPR036852">
    <property type="entry name" value="Peptidase_S8/S53_dom_sf"/>
</dbReference>
<dbReference type="InterPro" id="IPR022398">
    <property type="entry name" value="Peptidase_S8_His-AS"/>
</dbReference>
<dbReference type="InterPro" id="IPR023828">
    <property type="entry name" value="Peptidase_S8_Ser-AS"/>
</dbReference>
<dbReference type="InterPro" id="IPR050131">
    <property type="entry name" value="Peptidase_S8_subtilisin-like"/>
</dbReference>
<dbReference type="InterPro" id="IPR015500">
    <property type="entry name" value="Peptidase_S8_subtilisin-rel"/>
</dbReference>
<dbReference type="InterPro" id="IPR034051">
    <property type="entry name" value="TPP_II_domain"/>
</dbReference>
<dbReference type="InterPro" id="IPR022232">
    <property type="entry name" value="TPPII_C_art"/>
</dbReference>
<dbReference type="InterPro" id="IPR046939">
    <property type="entry name" value="TPPII_C_sf"/>
</dbReference>
<dbReference type="InterPro" id="IPR048384">
    <property type="entry name" value="TPPII_GBD"/>
</dbReference>
<dbReference type="InterPro" id="IPR048383">
    <property type="entry name" value="TPPII_Ig-like-1"/>
</dbReference>
<dbReference type="InterPro" id="IPR022229">
    <property type="entry name" value="TPPII_Ig-like-2"/>
</dbReference>
<dbReference type="InterPro" id="IPR046940">
    <property type="entry name" value="TPPII_Ig-like_sf"/>
</dbReference>
<dbReference type="PANTHER" id="PTHR43806">
    <property type="entry name" value="PEPTIDASE S8"/>
    <property type="match status" value="1"/>
</dbReference>
<dbReference type="PANTHER" id="PTHR43806:SF14">
    <property type="entry name" value="TRIPEPTIDYL-PEPTIDASE 2"/>
    <property type="match status" value="1"/>
</dbReference>
<dbReference type="Pfam" id="PF00082">
    <property type="entry name" value="Peptidase_S8"/>
    <property type="match status" value="1"/>
</dbReference>
<dbReference type="Pfam" id="PF12580">
    <property type="entry name" value="TPPII"/>
    <property type="match status" value="1"/>
</dbReference>
<dbReference type="Pfam" id="PF12583">
    <property type="entry name" value="TPPII_C"/>
    <property type="match status" value="1"/>
</dbReference>
<dbReference type="Pfam" id="PF21316">
    <property type="entry name" value="TPPII_GBD"/>
    <property type="match status" value="1"/>
</dbReference>
<dbReference type="Pfam" id="PF21223">
    <property type="entry name" value="TPPII_Ig-like-1"/>
    <property type="match status" value="1"/>
</dbReference>
<dbReference type="PRINTS" id="PR00723">
    <property type="entry name" value="SUBTILISIN"/>
</dbReference>
<dbReference type="SUPFAM" id="SSF52743">
    <property type="entry name" value="Subtilisin-like"/>
    <property type="match status" value="1"/>
</dbReference>
<dbReference type="PROSITE" id="PS51892">
    <property type="entry name" value="SUBTILASE"/>
    <property type="match status" value="1"/>
</dbReference>
<dbReference type="PROSITE" id="PS00137">
    <property type="entry name" value="SUBTILASE_HIS"/>
    <property type="match status" value="1"/>
</dbReference>
<dbReference type="PROSITE" id="PS00138">
    <property type="entry name" value="SUBTILASE_SER"/>
    <property type="match status" value="1"/>
</dbReference>
<keyword id="KW-0007">Acetylation</keyword>
<keyword id="KW-0025">Alternative splicing</keyword>
<keyword id="KW-0031">Aminopeptidase</keyword>
<keyword id="KW-0963">Cytoplasm</keyword>
<keyword id="KW-0378">Hydrolase</keyword>
<keyword id="KW-0539">Nucleus</keyword>
<keyword id="KW-0597">Phosphoprotein</keyword>
<keyword id="KW-0645">Protease</keyword>
<keyword id="KW-1185">Reference proteome</keyword>
<keyword id="KW-0720">Serine protease</keyword>
<comment type="function">
    <text evidence="2 5">Cytosolic tripeptidyl-peptidase that releases N-terminal tripeptides from polypeptides and is a component of the proteolytic cascade acting downstream of the 26S proteasome in the ubiquitin-proteasome pathway. It plays an important role in intracellular amino acid homeostasis (By similarity). Stimulates adipogenesis (PubMed:17932511).</text>
</comment>
<comment type="catalytic activity">
    <reaction evidence="2">
        <text>Release of an N-terminal tripeptide from a polypeptide.</text>
        <dbReference type="EC" id="3.4.14.10"/>
    </reaction>
</comment>
<comment type="subcellular location">
    <subcellularLocation>
        <location evidence="6">Cytoplasm</location>
    </subcellularLocation>
    <subcellularLocation>
        <location evidence="6">Nucleus</location>
    </subcellularLocation>
    <text>Translocates to the nucleus in response to gamma-irradiation.</text>
</comment>
<comment type="alternative products">
    <event type="alternative splicing"/>
    <isoform>
        <id>Q64514-1</id>
        <name>Long</name>
        <sequence type="displayed"/>
    </isoform>
    <isoform>
        <id>Q64514-2</id>
        <name>Short</name>
        <sequence type="described" ref="VSP_005446"/>
    </isoform>
</comment>
<comment type="tissue specificity">
    <text evidence="5">Expressed in the brain, skeletal muscle, gonadal and mesenteric white adipose tissue and brown adipose tissues.</text>
</comment>
<comment type="disruption phenotype">
    <text evidence="5">Homozygous mutant mice die in utero before embryonic day 9.0. Heterozygous mice display normal food intake but appear lean with a significant reduction in body fat, smaller adipocytes, decreased plasma insulin levels and less white adipose tissue in the gonad, groin and mesenteric regions.</text>
</comment>
<comment type="miscellaneous">
    <text evidence="1">The limitation of proteolytic products to tripeptides is achieved by tailoring the size of the substrate-binding cleft: the two negatively charged residues Glu-305 and Glu-331 that are blocking position P4 limit the number of residues that can be accommodated in the binding cleft and thus create a molecular ruler. At the same time, they orient substrates so that the tripeptides are removed exclusively from the N-terminus (By similarity).</text>
</comment>
<comment type="similarity">
    <text evidence="9">Belongs to the peptidase S8 family.</text>
</comment>
<gene>
    <name type="primary">Tpp2</name>
</gene>
<evidence type="ECO:0000250" key="1"/>
<evidence type="ECO:0000250" key="2">
    <source>
        <dbReference type="UniProtKB" id="P29144"/>
    </source>
</evidence>
<evidence type="ECO:0000255" key="3">
    <source>
        <dbReference type="PROSITE-ProRule" id="PRU01240"/>
    </source>
</evidence>
<evidence type="ECO:0000256" key="4">
    <source>
        <dbReference type="SAM" id="MobiDB-lite"/>
    </source>
</evidence>
<evidence type="ECO:0000269" key="5">
    <source>
    </source>
</evidence>
<evidence type="ECO:0000269" key="6">
    <source>
    </source>
</evidence>
<evidence type="ECO:0000303" key="7">
    <source>
    </source>
</evidence>
<evidence type="ECO:0000303" key="8">
    <source>
    </source>
</evidence>
<evidence type="ECO:0000305" key="9"/>
<evidence type="ECO:0007744" key="10">
    <source>
    </source>
</evidence>
<sequence>MATAATEEPFPFHGLLPKKETGASSFLCRYPEYDGRGVLIAVLDTGVDPGAPGMQVTTDGKPKIIDIIDTTGSGDVNTATEVEPKDGEIIGLSGRVLKIPANWTNPLGKYHIGIKNGYDFYPKALKERIQKERKEKIWDPIHRVALAEACRKQEEFDIANNGSSQANKLIKEELQSQVELLNSFEKKYSDPGPVYDCLVWHDGETWRACVDSNENGDLSKCAVLRNYKEAQEYSSFGTAEMLNYSVNIYDDGNLLSIVTSGGAHGTHVASIAAGHFPEEPERNGVAPGAQILSIKIGDTRLSTMETGTGLIRAMIEVINHKCDLVNYSYGEATHWPNSGRICEVINEAVWKHNTIYVSSAGNNGPCLSTVGCPGGTTSSVIGVGAYVSPDMMVAEYSLREKLPANQYTWSSRGPSADGALGVSISAPGGAIASVPNWTLRGTQLMNGTSMSSPNACGGIALVLSGLKANNVDYTVHSVRRALENTAIKADNIEVFAQGHGIIQVDKAYDYLIQNTSFANRLGFTVTVGNNRGIYLRDPVQVAAPSDHGVGIEPVFPENTENSEKISFQLHLALTSNSSWVQCPSHLELMNQCRHINIRVDPRGLREGLHYTEVCGYDIASPNAGPLFRVPITAVIAAKVNESSHYDLAFTDVHFKPGQIRRHFVEVPEGATWAEVTVCSCSSEVSAKFVLHAVQLVKQRAYRSHEFYKFCSLPEKGTLIEAFPVLGGKAIEFCIARWWASLSDVNIDYTISFHGIVCTAPQLNIHASEGINRFDVQSSLKYEDLAPCITLKSWVQTLRPVNAKTRPLGSRDVLPNNRQLYEMVLTYSFHQPKSGEVTPSCPLLCELLYESEFDSQLWIIFDQNKRQMGSGDAYPHQYSLKLEKGDYTIRLQIRHEQISDLDRLKDLPFIVSHRLSNTLSLDIHENHSLALLGKKKSSSLTLPPKYNQPFFVTSLPDDKIPKGAGPGCYLAGSLTLSKTELGKKAGQSAAKRQGKFKKDVIPVHYYLIPPPTKIKNGSKDKEKDSEKEKDLKEEFTEALRDLKIQWMTKLDSTDIYNELKETYPAYLPLYVARLHQLDAEKERMKRLNEIVDAANAVISHIDQTALAVYIAMKTDPRPDAATIKNDMDKQKSTLIDALCRKGCALADHLLHTQPHDGAAAGDAEAKEEEGESTMESLSETYWETTKWTDLFDTKVLIFAYKHALVNKMYGRGLKFATKLVEEKPTKENWKNCIQLMKLLGWTHCASFTENWLPIMYPPDYCVF</sequence>
<proteinExistence type="evidence at protein level"/>
<name>TPP2_MOUSE</name>
<accession>Q64514</accession>
<accession>Q5D072</accession>
<protein>
    <recommendedName>
        <fullName>Tripeptidyl-peptidase 2</fullName>
        <shortName>TPP-2</shortName>
        <ecNumber evidence="2">3.4.14.10</ecNumber>
    </recommendedName>
    <alternativeName>
        <fullName>Tripeptidyl aminopeptidase</fullName>
    </alternativeName>
    <alternativeName>
        <fullName>Tripeptidyl-peptidase II</fullName>
        <shortName>TPP-II</shortName>
    </alternativeName>
</protein>
<organism>
    <name type="scientific">Mus musculus</name>
    <name type="common">Mouse</name>
    <dbReference type="NCBI Taxonomy" id="10090"/>
    <lineage>
        <taxon>Eukaryota</taxon>
        <taxon>Metazoa</taxon>
        <taxon>Chordata</taxon>
        <taxon>Craniata</taxon>
        <taxon>Vertebrata</taxon>
        <taxon>Euteleostomi</taxon>
        <taxon>Mammalia</taxon>
        <taxon>Eutheria</taxon>
        <taxon>Euarchontoglires</taxon>
        <taxon>Glires</taxon>
        <taxon>Rodentia</taxon>
        <taxon>Myomorpha</taxon>
        <taxon>Muroidea</taxon>
        <taxon>Muridae</taxon>
        <taxon>Murinae</taxon>
        <taxon>Mus</taxon>
        <taxon>Mus</taxon>
    </lineage>
</organism>
<reference key="1">
    <citation type="journal article" date="1994" name="Biochem. J.">
        <title>Characterization of cDNA for murine tripeptidyl-peptidase II reveals alternative splicing.</title>
        <authorList>
            <person name="Tomkinson B."/>
        </authorList>
    </citation>
    <scope>NUCLEOTIDE SEQUENCE [MRNA] (ISOFORMS LONG AND SHORT)</scope>
    <source>
        <strain>Leaden X A1</strain>
    </source>
</reference>
<reference key="2">
    <citation type="journal article" date="2004" name="Genome Res.">
        <title>The status, quality, and expansion of the NIH full-length cDNA project: the Mammalian Gene Collection (MGC).</title>
        <authorList>
            <consortium name="The MGC Project Team"/>
        </authorList>
    </citation>
    <scope>NUCLEOTIDE SEQUENCE [LARGE SCALE MRNA] (ISOFORM SHORT)</scope>
    <source>
        <tissue>Olfactory epithelium</tissue>
    </source>
</reference>
<reference key="3">
    <citation type="journal article" date="2007" name="EMBO Rep.">
        <title>Tripeptidyl peptidase II promotes fat formation in a conserved fashion.</title>
        <authorList>
            <person name="McKay R.M."/>
            <person name="McKay J.P."/>
            <person name="Suh J.M."/>
            <person name="Avery L."/>
            <person name="Graff J.M."/>
        </authorList>
    </citation>
    <scope>FUNCTION</scope>
    <scope>TISSUE SPECIFICITY</scope>
    <scope>DISRUPTION PHENOTYPE</scope>
    <scope>MUTAGENESIS OF ASP-44</scope>
</reference>
<reference key="4">
    <citation type="journal article" date="2009" name="Biochem. Biophys. Res. Commun.">
        <title>A role for nuclear translocation of tripeptidyl-peptidase II in reactive oxygen species-dependent DNA damage responses.</title>
        <authorList>
            <person name="Preta G."/>
            <person name="de Klark R."/>
            <person name="Glas R."/>
        </authorList>
    </citation>
    <scope>SUBCELLULAR LOCATION</scope>
</reference>
<reference key="5">
    <citation type="journal article" date="2010" name="Cell">
        <title>A tissue-specific atlas of mouse protein phosphorylation and expression.</title>
        <authorList>
            <person name="Huttlin E.L."/>
            <person name="Jedrychowski M.P."/>
            <person name="Elias J.E."/>
            <person name="Goswami T."/>
            <person name="Rad R."/>
            <person name="Beausoleil S.A."/>
            <person name="Villen J."/>
            <person name="Haas W."/>
            <person name="Sowa M.E."/>
            <person name="Gygi S.P."/>
        </authorList>
    </citation>
    <scope>IDENTIFICATION BY MASS SPECTROMETRY [LARGE SCALE ANALYSIS]</scope>
    <source>
        <tissue>Brain</tissue>
        <tissue>Brown adipose tissue</tissue>
        <tissue>Heart</tissue>
        <tissue>Kidney</tissue>
        <tissue>Liver</tissue>
        <tissue>Lung</tissue>
        <tissue>Pancreas</tissue>
        <tissue>Spleen</tissue>
        <tissue>Testis</tissue>
    </source>
</reference>
<reference key="6">
    <citation type="journal article" date="2013" name="Mol. Cell">
        <title>SIRT5-mediated lysine desuccinylation impacts diverse metabolic pathways.</title>
        <authorList>
            <person name="Park J."/>
            <person name="Chen Y."/>
            <person name="Tishkoff D.X."/>
            <person name="Peng C."/>
            <person name="Tan M."/>
            <person name="Dai L."/>
            <person name="Xie Z."/>
            <person name="Zhang Y."/>
            <person name="Zwaans B.M."/>
            <person name="Skinner M.E."/>
            <person name="Lombard D.B."/>
            <person name="Zhao Y."/>
        </authorList>
    </citation>
    <scope>ACETYLATION [LARGE SCALE ANALYSIS] AT LYS-401</scope>
    <scope>IDENTIFICATION BY MASS SPECTROMETRY [LARGE SCALE ANALYSIS]</scope>
    <source>
        <tissue>Embryonic fibroblast</tissue>
    </source>
</reference>
<feature type="initiator methionine" description="Removed" evidence="2">
    <location>
        <position position="1"/>
    </location>
</feature>
<feature type="chain" id="PRO_0000076423" description="Tripeptidyl-peptidase 2">
    <location>
        <begin position="2"/>
        <end position="1262"/>
    </location>
</feature>
<feature type="domain" description="Peptidase S8" evidence="3">
    <location>
        <begin position="9"/>
        <end position="508"/>
    </location>
</feature>
<feature type="region of interest" description="Disordered" evidence="4">
    <location>
        <begin position="1010"/>
        <end position="1030"/>
    </location>
</feature>
<feature type="compositionally biased region" description="Basic and acidic residues" evidence="4">
    <location>
        <begin position="1016"/>
        <end position="1030"/>
    </location>
</feature>
<feature type="active site" description="Charge relay system" evidence="3">
    <location>
        <position position="44"/>
    </location>
</feature>
<feature type="active site" description="Charge relay system" evidence="3">
    <location>
        <position position="264"/>
    </location>
</feature>
<feature type="active site" description="Charge relay system" evidence="3">
    <location>
        <position position="449"/>
    </location>
</feature>
<feature type="modified residue" description="N-acetylalanine" evidence="2">
    <location>
        <position position="2"/>
    </location>
</feature>
<feature type="modified residue" description="N6-acetyllysine" evidence="10">
    <location>
        <position position="401"/>
    </location>
</feature>
<feature type="modified residue" description="Phosphoserine" evidence="2">
    <location>
        <position position="915"/>
    </location>
</feature>
<feature type="splice variant" id="VSP_005446" description="In isoform Short." evidence="7 8">
    <location>
        <begin position="985"/>
        <end position="997"/>
    </location>
</feature>
<feature type="mutagenesis site" description="No effect on adipogenesis." evidence="5">
    <original>D</original>
    <variation>A</variation>
    <location>
        <position position="44"/>
    </location>
</feature>